<feature type="chain" id="PRO_1000212589" description="Protein nucleotidyltransferase YdiU">
    <location>
        <begin position="1"/>
        <end position="492"/>
    </location>
</feature>
<feature type="active site" description="Proton acceptor" evidence="1">
    <location>
        <position position="253"/>
    </location>
</feature>
<feature type="binding site" evidence="1">
    <location>
        <position position="91"/>
    </location>
    <ligand>
        <name>ATP</name>
        <dbReference type="ChEBI" id="CHEBI:30616"/>
    </ligand>
</feature>
<feature type="binding site" evidence="1">
    <location>
        <position position="93"/>
    </location>
    <ligand>
        <name>ATP</name>
        <dbReference type="ChEBI" id="CHEBI:30616"/>
    </ligand>
</feature>
<feature type="binding site" evidence="1">
    <location>
        <position position="94"/>
    </location>
    <ligand>
        <name>ATP</name>
        <dbReference type="ChEBI" id="CHEBI:30616"/>
    </ligand>
</feature>
<feature type="binding site" evidence="1">
    <location>
        <position position="114"/>
    </location>
    <ligand>
        <name>ATP</name>
        <dbReference type="ChEBI" id="CHEBI:30616"/>
    </ligand>
</feature>
<feature type="binding site" evidence="1">
    <location>
        <position position="126"/>
    </location>
    <ligand>
        <name>ATP</name>
        <dbReference type="ChEBI" id="CHEBI:30616"/>
    </ligand>
</feature>
<feature type="binding site" evidence="1">
    <location>
        <position position="127"/>
    </location>
    <ligand>
        <name>ATP</name>
        <dbReference type="ChEBI" id="CHEBI:30616"/>
    </ligand>
</feature>
<feature type="binding site" evidence="1">
    <location>
        <position position="177"/>
    </location>
    <ligand>
        <name>ATP</name>
        <dbReference type="ChEBI" id="CHEBI:30616"/>
    </ligand>
</feature>
<feature type="binding site" evidence="1">
    <location>
        <position position="184"/>
    </location>
    <ligand>
        <name>ATP</name>
        <dbReference type="ChEBI" id="CHEBI:30616"/>
    </ligand>
</feature>
<feature type="binding site" evidence="1">
    <location>
        <position position="254"/>
    </location>
    <ligand>
        <name>Mg(2+)</name>
        <dbReference type="ChEBI" id="CHEBI:18420"/>
    </ligand>
</feature>
<feature type="binding site" evidence="1">
    <location>
        <position position="263"/>
    </location>
    <ligand>
        <name>ATP</name>
        <dbReference type="ChEBI" id="CHEBI:30616"/>
    </ligand>
</feature>
<feature type="binding site" evidence="1">
    <location>
        <position position="263"/>
    </location>
    <ligand>
        <name>Mg(2+)</name>
        <dbReference type="ChEBI" id="CHEBI:18420"/>
    </ligand>
</feature>
<keyword id="KW-0067">ATP-binding</keyword>
<keyword id="KW-0460">Magnesium</keyword>
<keyword id="KW-0464">Manganese</keyword>
<keyword id="KW-0479">Metal-binding</keyword>
<keyword id="KW-0547">Nucleotide-binding</keyword>
<keyword id="KW-0548">Nucleotidyltransferase</keyword>
<keyword id="KW-1185">Reference proteome</keyword>
<keyword id="KW-0808">Transferase</keyword>
<sequence length="492" mass="55692">MDAEIISVMPFDNSYARLDKKFYQRINPTPVKHPRIILVNRELAGEMEFPLPETDAELAELFSGNKPPQGSEPLAQVYAGHQFGNFVPQLGDGRAVLLGEFVSSSGKRYDIQLKGAGQTMYSRNGDGRSPLGPVIREYIVSEAMFRLGIPTTRALAMVCSGEEVFREQALPGAVFTRVASSHIRIGTFEYFASRNDYEGVKTLADYAIDRHYPHLKEAGNPYAAFLGKVCSVQARLIAKWMRIGFIHGVMNTDNTTISGETIDYGPCAFMDGYDPATVFSSIDHYGRYAYARQPSIAQWNLAGLAGCLLPLIHKDTGQAKSRAEEIVQGFGPEFRTHYFAEMCSKIGLKPEEPVQELLNDLLQIMHESKADFTLSFRMLGKAVLGNETPLLKLFNERDKIREWLEKWDEERERQNIKKEDAVRTMDRNNPAFIPRNHRVEQAISAAVENDDFEPTKKLIKILHHPYDDQPEYDEYMQPPEPTERVYQTFCGT</sequence>
<evidence type="ECO:0000255" key="1">
    <source>
        <dbReference type="HAMAP-Rule" id="MF_00692"/>
    </source>
</evidence>
<reference key="1">
    <citation type="submission" date="2009-06" db="EMBL/GenBank/DDBJ databases">
        <title>Complete sequence of Desulfovibrio salexigens DSM 2638.</title>
        <authorList>
            <consortium name="US DOE Joint Genome Institute"/>
            <person name="Lucas S."/>
            <person name="Copeland A."/>
            <person name="Lapidus A."/>
            <person name="Glavina del Rio T."/>
            <person name="Tice H."/>
            <person name="Bruce D."/>
            <person name="Goodwin L."/>
            <person name="Pitluck S."/>
            <person name="Munk A.C."/>
            <person name="Brettin T."/>
            <person name="Detter J.C."/>
            <person name="Han C."/>
            <person name="Tapia R."/>
            <person name="Larimer F."/>
            <person name="Land M."/>
            <person name="Hauser L."/>
            <person name="Kyrpides N."/>
            <person name="Anderson I."/>
            <person name="Wall J.D."/>
            <person name="Arkin A.P."/>
            <person name="Dehal P."/>
            <person name="Chivian D."/>
            <person name="Giles B."/>
            <person name="Hazen T.C."/>
        </authorList>
    </citation>
    <scope>NUCLEOTIDE SEQUENCE [LARGE SCALE GENOMIC DNA]</scope>
    <source>
        <strain>ATCC 14822 / DSM 2638 / NCIMB 8403 / VKM B-1763</strain>
    </source>
</reference>
<comment type="function">
    <text evidence="1">Nucleotidyltransferase involved in the post-translational modification of proteins. It can catalyze the addition of adenosine monophosphate (AMP) or uridine monophosphate (UMP) to a protein, resulting in modifications known as AMPylation and UMPylation.</text>
</comment>
<comment type="catalytic activity">
    <reaction evidence="1">
        <text>L-seryl-[protein] + ATP = 3-O-(5'-adenylyl)-L-seryl-[protein] + diphosphate</text>
        <dbReference type="Rhea" id="RHEA:58120"/>
        <dbReference type="Rhea" id="RHEA-COMP:9863"/>
        <dbReference type="Rhea" id="RHEA-COMP:15073"/>
        <dbReference type="ChEBI" id="CHEBI:29999"/>
        <dbReference type="ChEBI" id="CHEBI:30616"/>
        <dbReference type="ChEBI" id="CHEBI:33019"/>
        <dbReference type="ChEBI" id="CHEBI:142516"/>
        <dbReference type="EC" id="2.7.7.108"/>
    </reaction>
</comment>
<comment type="catalytic activity">
    <reaction evidence="1">
        <text>L-threonyl-[protein] + ATP = 3-O-(5'-adenylyl)-L-threonyl-[protein] + diphosphate</text>
        <dbReference type="Rhea" id="RHEA:54292"/>
        <dbReference type="Rhea" id="RHEA-COMP:11060"/>
        <dbReference type="Rhea" id="RHEA-COMP:13847"/>
        <dbReference type="ChEBI" id="CHEBI:30013"/>
        <dbReference type="ChEBI" id="CHEBI:30616"/>
        <dbReference type="ChEBI" id="CHEBI:33019"/>
        <dbReference type="ChEBI" id="CHEBI:138113"/>
        <dbReference type="EC" id="2.7.7.108"/>
    </reaction>
</comment>
<comment type="catalytic activity">
    <reaction evidence="1">
        <text>L-tyrosyl-[protein] + ATP = O-(5'-adenylyl)-L-tyrosyl-[protein] + diphosphate</text>
        <dbReference type="Rhea" id="RHEA:54288"/>
        <dbReference type="Rhea" id="RHEA-COMP:10136"/>
        <dbReference type="Rhea" id="RHEA-COMP:13846"/>
        <dbReference type="ChEBI" id="CHEBI:30616"/>
        <dbReference type="ChEBI" id="CHEBI:33019"/>
        <dbReference type="ChEBI" id="CHEBI:46858"/>
        <dbReference type="ChEBI" id="CHEBI:83624"/>
        <dbReference type="EC" id="2.7.7.108"/>
    </reaction>
</comment>
<comment type="catalytic activity">
    <reaction evidence="1">
        <text>L-histidyl-[protein] + UTP = N(tele)-(5'-uridylyl)-L-histidyl-[protein] + diphosphate</text>
        <dbReference type="Rhea" id="RHEA:83891"/>
        <dbReference type="Rhea" id="RHEA-COMP:9745"/>
        <dbReference type="Rhea" id="RHEA-COMP:20239"/>
        <dbReference type="ChEBI" id="CHEBI:29979"/>
        <dbReference type="ChEBI" id="CHEBI:33019"/>
        <dbReference type="ChEBI" id="CHEBI:46398"/>
        <dbReference type="ChEBI" id="CHEBI:233474"/>
    </reaction>
</comment>
<comment type="catalytic activity">
    <reaction evidence="1">
        <text>L-seryl-[protein] + UTP = O-(5'-uridylyl)-L-seryl-[protein] + diphosphate</text>
        <dbReference type="Rhea" id="RHEA:64604"/>
        <dbReference type="Rhea" id="RHEA-COMP:9863"/>
        <dbReference type="Rhea" id="RHEA-COMP:16635"/>
        <dbReference type="ChEBI" id="CHEBI:29999"/>
        <dbReference type="ChEBI" id="CHEBI:33019"/>
        <dbReference type="ChEBI" id="CHEBI:46398"/>
        <dbReference type="ChEBI" id="CHEBI:156051"/>
    </reaction>
</comment>
<comment type="catalytic activity">
    <reaction evidence="1">
        <text>L-tyrosyl-[protein] + UTP = O-(5'-uridylyl)-L-tyrosyl-[protein] + diphosphate</text>
        <dbReference type="Rhea" id="RHEA:83887"/>
        <dbReference type="Rhea" id="RHEA-COMP:10136"/>
        <dbReference type="Rhea" id="RHEA-COMP:20238"/>
        <dbReference type="ChEBI" id="CHEBI:33019"/>
        <dbReference type="ChEBI" id="CHEBI:46398"/>
        <dbReference type="ChEBI" id="CHEBI:46858"/>
        <dbReference type="ChEBI" id="CHEBI:90602"/>
    </reaction>
</comment>
<comment type="cofactor">
    <cofactor evidence="1">
        <name>Mg(2+)</name>
        <dbReference type="ChEBI" id="CHEBI:18420"/>
    </cofactor>
    <cofactor evidence="1">
        <name>Mn(2+)</name>
        <dbReference type="ChEBI" id="CHEBI:29035"/>
    </cofactor>
</comment>
<comment type="similarity">
    <text evidence="1">Belongs to the SELO family.</text>
</comment>
<organism>
    <name type="scientific">Maridesulfovibrio salexigens (strain ATCC 14822 / DSM 2638 / NCIMB 8403 / VKM B-1763)</name>
    <name type="common">Desulfovibrio salexigens</name>
    <dbReference type="NCBI Taxonomy" id="526222"/>
    <lineage>
        <taxon>Bacteria</taxon>
        <taxon>Pseudomonadati</taxon>
        <taxon>Thermodesulfobacteriota</taxon>
        <taxon>Desulfovibrionia</taxon>
        <taxon>Desulfovibrionales</taxon>
        <taxon>Desulfovibrionaceae</taxon>
        <taxon>Maridesulfovibrio</taxon>
    </lineage>
</organism>
<accession>C6C1K6</accession>
<gene>
    <name evidence="1" type="primary">ydiU</name>
    <name evidence="1" type="synonym">selO</name>
    <name type="ordered locus">Desal_3130</name>
</gene>
<protein>
    <recommendedName>
        <fullName evidence="1">Protein nucleotidyltransferase YdiU</fullName>
        <ecNumber evidence="1">2.7.7.-</ecNumber>
    </recommendedName>
    <alternativeName>
        <fullName evidence="1">Protein adenylyltransferase YdiU</fullName>
        <ecNumber evidence="1">2.7.7.108</ecNumber>
    </alternativeName>
    <alternativeName>
        <fullName evidence="1">Protein uridylyltransferase YdiU</fullName>
        <ecNumber evidence="1">2.7.7.-</ecNumber>
    </alternativeName>
</protein>
<dbReference type="EC" id="2.7.7.-" evidence="1"/>
<dbReference type="EC" id="2.7.7.108" evidence="1"/>
<dbReference type="EMBL" id="CP001649">
    <property type="protein sequence ID" value="ACS81181.1"/>
    <property type="molecule type" value="Genomic_DNA"/>
</dbReference>
<dbReference type="RefSeq" id="WP_015852997.1">
    <property type="nucleotide sequence ID" value="NC_012881.1"/>
</dbReference>
<dbReference type="SMR" id="C6C1K6"/>
<dbReference type="STRING" id="526222.Desal_3130"/>
<dbReference type="KEGG" id="dsa:Desal_3130"/>
<dbReference type="eggNOG" id="COG0397">
    <property type="taxonomic scope" value="Bacteria"/>
</dbReference>
<dbReference type="HOGENOM" id="CLU_010245_4_0_7"/>
<dbReference type="OrthoDB" id="9776281at2"/>
<dbReference type="Proteomes" id="UP000002601">
    <property type="component" value="Chromosome"/>
</dbReference>
<dbReference type="GO" id="GO:0070733">
    <property type="term" value="F:AMPylase activity"/>
    <property type="evidence" value="ECO:0007669"/>
    <property type="project" value="TreeGrafter"/>
</dbReference>
<dbReference type="GO" id="GO:0005524">
    <property type="term" value="F:ATP binding"/>
    <property type="evidence" value="ECO:0007669"/>
    <property type="project" value="UniProtKB-UniRule"/>
</dbReference>
<dbReference type="GO" id="GO:0000287">
    <property type="term" value="F:magnesium ion binding"/>
    <property type="evidence" value="ECO:0007669"/>
    <property type="project" value="UniProtKB-UniRule"/>
</dbReference>
<dbReference type="HAMAP" id="MF_00692">
    <property type="entry name" value="YdiU_SelO"/>
    <property type="match status" value="1"/>
</dbReference>
<dbReference type="InterPro" id="IPR003846">
    <property type="entry name" value="SelO"/>
</dbReference>
<dbReference type="NCBIfam" id="NF000658">
    <property type="entry name" value="PRK00029.1"/>
    <property type="match status" value="1"/>
</dbReference>
<dbReference type="PANTHER" id="PTHR32057">
    <property type="entry name" value="PROTEIN ADENYLYLTRANSFERASE SELO, MITOCHONDRIAL"/>
    <property type="match status" value="1"/>
</dbReference>
<dbReference type="PANTHER" id="PTHR32057:SF14">
    <property type="entry name" value="PROTEIN ADENYLYLTRANSFERASE SELO, MITOCHONDRIAL"/>
    <property type="match status" value="1"/>
</dbReference>
<dbReference type="Pfam" id="PF02696">
    <property type="entry name" value="SelO"/>
    <property type="match status" value="1"/>
</dbReference>
<name>SELO_MARSD</name>
<proteinExistence type="inferred from homology"/>